<feature type="chain" id="PRO_0000068413" description="Phage T7 exclusion protein">
    <location>
        <begin position="1"/>
        <end position="741"/>
    </location>
</feature>
<feature type="domain" description="KAP NTPase">
    <location>
        <begin position="27"/>
        <end position="334"/>
    </location>
</feature>
<feature type="sequence conflict" description="In Ref. 2; AAB48033." evidence="2" ref="2">
    <original>DQVSPFFDDWPAVEEKLKVMLSGNELTPEQEALKTALENDD</original>
    <variation>VTRSVRSLMTGQQSKRS</variation>
    <location>
        <begin position="701"/>
        <end position="741"/>
    </location>
</feature>
<reference key="1">
    <citation type="submission" date="2000-04" db="EMBL/GenBank/DDBJ databases">
        <title>Complete nucleotide sequence of the F plasmid: its implications for organization and diversification of plasmid genomes.</title>
        <authorList>
            <person name="Shimizu H."/>
            <person name="Saitoh Y."/>
            <person name="Suda Y."/>
            <person name="Uehara K."/>
            <person name="Sampei G."/>
            <person name="Mizobuchi K."/>
        </authorList>
    </citation>
    <scope>NUCLEOTIDE SEQUENCE [LARGE SCALE GENOMIC DNA]</scope>
    <source>
        <strain>K12 / CR63</strain>
    </source>
</reference>
<reference key="2">
    <citation type="submission" date="1996-11" db="EMBL/GenBank/DDBJ databases">
        <authorList>
            <person name="Molineux I.J."/>
        </authorList>
    </citation>
    <scope>NUCLEOTIDE SEQUENCE [GENOMIC DNA] OF 411-735</scope>
    <source>
        <strain>K12</strain>
    </source>
</reference>
<reference key="3">
    <citation type="journal article" date="1971" name="Nature New Biol.">
        <title>T7 translational control mechanisms and their inhibition by F factors.</title>
        <authorList>
            <person name="Morrison T.G."/>
            <person name="Malamy M.H."/>
        </authorList>
    </citation>
    <scope>FUNCTION</scope>
</reference>
<name>PIFA_ECOLI</name>
<organism>
    <name type="scientific">Escherichia coli (strain K12)</name>
    <dbReference type="NCBI Taxonomy" id="83333"/>
    <lineage>
        <taxon>Bacteria</taxon>
        <taxon>Pseudomonadati</taxon>
        <taxon>Pseudomonadota</taxon>
        <taxon>Gammaproteobacteria</taxon>
        <taxon>Enterobacterales</taxon>
        <taxon>Enterobacteriaceae</taxon>
        <taxon>Escherichia</taxon>
    </lineage>
</organism>
<proteinExistence type="predicted"/>
<evidence type="ECO:0000269" key="1">
    <source>
    </source>
</evidence>
<evidence type="ECO:0000305" key="2"/>
<accession>P96329</accession>
<sequence length="741" mass="84966">MKILRQLWNQKGLDAAVEDVPEDRYGFGNIAENISRSILTLPLEASNVVGIEGAWGSGKTSLLNLILRNLALKKDAHTHVLHISPWLSGGSPVEALFLPVATVIQQEMEIRYPPKGFKKLWRKYLLSPEAQKVIEYAQDTSSRVLPLVQYIGQFSSIINWIAGGIKVFSDSRLAVDQKTTTKLRAEIAGQLVSLDLKFIVVMDDLDRLEPSQVAEVFRLVRAVADLPRFTHILCYDRQIITHAVEHALNIEDGSRYLQKIIQLSFKLPRPEAFDLRNEFRQRAEALYQQINNQPPDSGMVRDLIAVTDTYGAALSTPREIHQAINSLIFLYPGMRDFVYFPDLCLLQLIRVTNPALYDWTEHYLTERSVIETGQGMLSDGEKADFREGLIRCMKTFRASNADSFLTLADWIPGISGHNDEYLNLFEPVSEDFRHIQTTGKRLSSLTHWRYYFAFSSPQNVLPPEFFRQLFEQAGVSEKQQQLSELLLSKINSVGSLSGTWFEHILSRLTPGLIRERNFEECAGLVHFFFDHTDEVSTRFSIRNPWFSLREMAINEVVRHLLKHMQDIDETRTITLMEKLIVTGASPFWIADFMRDLIWEHGLAQNAVPSPSDALFSRDITERLRDRFAERMNQPELQQQLLLRKSLLGYLYAWRDMSSGETVKQWVREVTTTDEGLVNLLIRLQTSVFSSHRGAYRRIARDQVSPFFDDWPAVEEKLKVMLSGNELTPEQEALKTALENDD</sequence>
<dbReference type="EMBL" id="AP001918">
    <property type="protein sequence ID" value="BAA97910.1"/>
    <property type="molecule type" value="Genomic_DNA"/>
</dbReference>
<dbReference type="EMBL" id="U89941">
    <property type="protein sequence ID" value="AAB48033.1"/>
    <property type="molecule type" value="Genomic_DNA"/>
</dbReference>
<dbReference type="RefSeq" id="NP_061419.1">
    <property type="nucleotide sequence ID" value="NC_002483.1"/>
</dbReference>
<dbReference type="RefSeq" id="WP_000698737.1">
    <property type="nucleotide sequence ID" value="NZ_JACEFS010000051.1"/>
</dbReference>
<dbReference type="KEGG" id="ecoc:C3026_24310"/>
<dbReference type="PRO" id="PR:P96329"/>
<dbReference type="Gene3D" id="3.40.50.300">
    <property type="entry name" value="P-loop containing nucleotide triphosphate hydrolases"/>
    <property type="match status" value="1"/>
</dbReference>
<dbReference type="InterPro" id="IPR011646">
    <property type="entry name" value="KAP_P-loop"/>
</dbReference>
<dbReference type="InterPro" id="IPR052754">
    <property type="entry name" value="NTPase_KAP_P-loop"/>
</dbReference>
<dbReference type="InterPro" id="IPR027417">
    <property type="entry name" value="P-loop_NTPase"/>
</dbReference>
<dbReference type="PANTHER" id="PTHR22674:SF6">
    <property type="entry name" value="NTPASE KAP FAMILY P-LOOP DOMAIN-CONTAINING PROTEIN 1"/>
    <property type="match status" value="1"/>
</dbReference>
<dbReference type="PANTHER" id="PTHR22674">
    <property type="entry name" value="NTPASE, KAP FAMILY P-LOOP DOMAIN-CONTAINING 1"/>
    <property type="match status" value="1"/>
</dbReference>
<dbReference type="Pfam" id="PF07693">
    <property type="entry name" value="KAP_NTPase"/>
    <property type="match status" value="1"/>
</dbReference>
<dbReference type="SUPFAM" id="SSF52540">
    <property type="entry name" value="P-loop containing nucleoside triphosphate hydrolases"/>
    <property type="match status" value="1"/>
</dbReference>
<comment type="function">
    <text evidence="1">Responsible for the exclusion of phage T7 by plasmid F. Growth of bacteriophage T7 is inhibited in cells of E.coli that carries the plasmid F.</text>
</comment>
<gene>
    <name type="primary">pifA</name>
    <name type="ordered locus">ECOK12F040</name>
</gene>
<protein>
    <recommendedName>
        <fullName>Phage T7 exclusion protein</fullName>
    </recommendedName>
</protein>
<geneLocation type="plasmid">
    <name>F</name>
</geneLocation>
<keyword id="KW-0614">Plasmid</keyword>